<feature type="signal peptide" evidence="1">
    <location>
        <begin position="1"/>
        <end position="26"/>
    </location>
</feature>
<feature type="chain" id="PRO_0000006513" description="Photosystem II extrinsic protein V">
    <location>
        <begin position="27"/>
        <end position="162"/>
    </location>
</feature>
<feature type="binding site" description="covalent" evidence="1">
    <location>
        <position position="62"/>
    </location>
    <ligand>
        <name>heme c</name>
        <dbReference type="ChEBI" id="CHEBI:61717"/>
    </ligand>
</feature>
<feature type="binding site" description="covalent" evidence="1">
    <location>
        <position position="65"/>
    </location>
    <ligand>
        <name>heme c</name>
        <dbReference type="ChEBI" id="CHEBI:61717"/>
    </ligand>
</feature>
<feature type="binding site" description="axial binding residue" evidence="1">
    <location>
        <position position="66"/>
    </location>
    <ligand>
        <name>heme c</name>
        <dbReference type="ChEBI" id="CHEBI:61717"/>
    </ligand>
    <ligandPart>
        <name>Fe</name>
        <dbReference type="ChEBI" id="CHEBI:18248"/>
    </ligandPart>
</feature>
<feature type="binding site" description="axial binding residue" evidence="1">
    <location>
        <position position="117"/>
    </location>
    <ligand>
        <name>heme c</name>
        <dbReference type="ChEBI" id="CHEBI:61717"/>
    </ligand>
    <ligandPart>
        <name>Fe</name>
        <dbReference type="ChEBI" id="CHEBI:18248"/>
    </ligandPart>
</feature>
<protein>
    <recommendedName>
        <fullName evidence="1">Photosystem II extrinsic protein V</fullName>
        <shortName evidence="1 4">PsbV</shortName>
    </recommendedName>
    <alternativeName>
        <fullName evidence="1">Cytochrome c-550</fullName>
    </alternativeName>
    <alternativeName>
        <fullName evidence="1 4">Cytochrome c550</fullName>
    </alternativeName>
</protein>
<reference key="1">
    <citation type="journal article" date="1995" name="Plant Mol. Biol. Rep.">
        <title>Nucleotide sequence of the cyanelle DNA from Cyanophora paradoxa.</title>
        <authorList>
            <person name="Stirewalt V.L."/>
            <person name="Michalowski C.B."/>
            <person name="Loeffelhardt W."/>
            <person name="Bohnert H.J."/>
            <person name="Bryant D.A."/>
        </authorList>
    </citation>
    <scope>NUCLEOTIDE SEQUENCE [LARGE SCALE GENOMIC DNA]</scope>
    <source>
        <strain>UTEX LB 555 / Pringsheim</strain>
    </source>
</reference>
<reference key="2">
    <citation type="book" date="1997" name="Eukaryotism and symbiosis">
        <title>The complete sequence of the cyanelle genome of Cyanophora paradoxa: the genetic complexity of a primitive plastid.</title>
        <editorList>
            <person name="Schenk H.E.A."/>
            <person name="Herrmann R."/>
            <person name="Jeon K.W."/>
            <person name="Mueller N.E."/>
            <person name="Schwemmler W."/>
        </editorList>
        <authorList>
            <person name="Loeffelhardt W."/>
            <person name="Stirewalt V.L."/>
            <person name="Michalowski C.B."/>
            <person name="Annarella M."/>
            <person name="Farley J.Y."/>
            <person name="Schluchter W.M."/>
            <person name="Chung S."/>
            <person name="Newmann-Spallart C."/>
            <person name="Steiner J.M."/>
            <person name="Jakowitsch J."/>
            <person name="Bohnert H.J."/>
            <person name="Bryant D.A."/>
        </authorList>
    </citation>
    <scope>NUCLEOTIDE SEQUENCE [LARGE SCALE GENOMIC DNA]</scope>
    <source>
        <strain>UTEX LB 555 / Pringsheim</strain>
    </source>
</reference>
<reference key="3">
    <citation type="journal article" date="2001" name="Plant Cell Physiol.">
        <title>Isolation and characterization of oxygen-evolving thylakoid membranes and photosystem II particles from a glaucocystophyte, Cyanophora paradoxa.</title>
        <authorList>
            <person name="Shibata M."/>
            <person name="Kashino Y."/>
            <person name="Satoh K."/>
            <person name="Koike H."/>
        </authorList>
    </citation>
    <scope>SUBUNIT</scope>
    <scope>SUBCELLULAR LOCATION</scope>
    <scope>ASSOCIATION WITH PHOTOSYSTEM II</scope>
    <source>
        <strain>NIES 547</strain>
    </source>
</reference>
<reference key="4">
    <citation type="journal article" date="2005" name="FEBS J.">
        <title>Distribution of the extrinsic proteins as a potential marker for the evolution of photosynthetic oxygen-evolving photosystem II.</title>
        <authorList>
            <person name="Enami I."/>
            <person name="Suzuki T."/>
            <person name="Tada O."/>
            <person name="Nakada Y."/>
            <person name="Nakamura K."/>
            <person name="Tohri A."/>
            <person name="Ohta H."/>
            <person name="Inoue I."/>
            <person name="Shen J.-R."/>
        </authorList>
    </citation>
    <scope>SUBUNIT</scope>
</reference>
<accession>P48263</accession>
<geneLocation type="cyanelle"/>
<sequence length="162" mass="17863">MFNKNFWTSIIIGCLFCTITYSGVNAAALDEETRTVALNSTETVVLTPEQVKRGKRLFNSTCGICHVGGITKTNPNVGLDSEALALATPPRNNIESLVDYMKNPTSYDGSEEIYDIHPSIRSADAFPKMRNLTEEDLYDIAGHILLSPKILPSQWGGGKIYY</sequence>
<comment type="function">
    <text evidence="1">One of the extrinsic, lumenal subunits of photosystem II (PSII). PSII is a light-driven water plastoquinone oxidoreductase, using light energy to abstract electrons from H(2)O, generating a proton gradient subsequently used for ATP formation. The extrinsic proteins stabilize the structure of photosystem II oxygen-evolving complex (OEC), the ion environment of oxygen evolution and protect the OEC against heat-induced inactivation.</text>
</comment>
<comment type="cofactor">
    <cofactor evidence="1">
        <name>heme c</name>
        <dbReference type="ChEBI" id="CHEBI:61717"/>
    </cofactor>
    <text evidence="1">Binds 1 heme c group covalently per subunit.</text>
</comment>
<comment type="subunit">
    <text evidence="2 3">PSII is composed of 1 copy each of membrane proteins PsbA, PsbB, PsbC, PsbD, PsbE, PsbF, PsbH, PsbI, PsbJ, PsbK, PsbL, PsbM, PsbT, PsbX, PsbY, PsbZ, Psb30/Ycf12, at least 3 peripheral proteins of the oxygen-evolving complex and a large number of cofactors. It forms dimeric complexes.</text>
</comment>
<comment type="subcellular location">
    <subcellularLocation>
        <location evidence="2">Plastid</location>
        <location evidence="2">Cyanelle thylakoid membrane</location>
        <topology evidence="2">Peripheral membrane protein</topology>
        <orientation evidence="5">Lumenal side</orientation>
    </subcellularLocation>
    <text evidence="5">Associated with photosystem II at the lumenal side of the thylakoid membrane.</text>
</comment>
<comment type="similarity">
    <text evidence="1">Belongs to the cytochrome c family. PsbV subfamily.</text>
</comment>
<name>CY550_CYAPA</name>
<gene>
    <name evidence="1" type="primary">psbV</name>
</gene>
<keyword id="KW-0194">Cyanelle</keyword>
<keyword id="KW-0249">Electron transport</keyword>
<keyword id="KW-0349">Heme</keyword>
<keyword id="KW-0408">Iron</keyword>
<keyword id="KW-0472">Membrane</keyword>
<keyword id="KW-0479">Metal-binding</keyword>
<keyword id="KW-0602">Photosynthesis</keyword>
<keyword id="KW-0604">Photosystem II</keyword>
<keyword id="KW-0934">Plastid</keyword>
<keyword id="KW-0732">Signal</keyword>
<keyword id="KW-0793">Thylakoid</keyword>
<keyword id="KW-0813">Transport</keyword>
<evidence type="ECO:0000255" key="1">
    <source>
        <dbReference type="HAMAP-Rule" id="MF_01378"/>
    </source>
</evidence>
<evidence type="ECO:0000269" key="2">
    <source>
    </source>
</evidence>
<evidence type="ECO:0000269" key="3">
    <source>
    </source>
</evidence>
<evidence type="ECO:0000303" key="4">
    <source>
    </source>
</evidence>
<evidence type="ECO:0000305" key="5">
    <source>
    </source>
</evidence>
<proteinExistence type="evidence at protein level"/>
<organism>
    <name type="scientific">Cyanophora paradoxa</name>
    <dbReference type="NCBI Taxonomy" id="2762"/>
    <lineage>
        <taxon>Eukaryota</taxon>
        <taxon>Glaucocystophyceae</taxon>
        <taxon>Cyanophoraceae</taxon>
        <taxon>Cyanophora</taxon>
    </lineage>
</organism>
<dbReference type="EMBL" id="U30821">
    <property type="protein sequence ID" value="AAA81291.1"/>
    <property type="molecule type" value="Genomic_DNA"/>
</dbReference>
<dbReference type="PIR" id="T06948">
    <property type="entry name" value="T06948"/>
</dbReference>
<dbReference type="RefSeq" id="NP_043260.1">
    <property type="nucleotide sequence ID" value="NC_001675.1"/>
</dbReference>
<dbReference type="SMR" id="P48263"/>
<dbReference type="GeneID" id="801683"/>
<dbReference type="GO" id="GO:0033115">
    <property type="term" value="C:cyanelle thylakoid membrane"/>
    <property type="evidence" value="ECO:0007669"/>
    <property type="project" value="UniProtKB-SubCell"/>
</dbReference>
<dbReference type="GO" id="GO:0009523">
    <property type="term" value="C:photosystem II"/>
    <property type="evidence" value="ECO:0007669"/>
    <property type="project" value="UniProtKB-KW"/>
</dbReference>
<dbReference type="GO" id="GO:0009055">
    <property type="term" value="F:electron transfer activity"/>
    <property type="evidence" value="ECO:0007669"/>
    <property type="project" value="InterPro"/>
</dbReference>
<dbReference type="GO" id="GO:0020037">
    <property type="term" value="F:heme binding"/>
    <property type="evidence" value="ECO:0007669"/>
    <property type="project" value="InterPro"/>
</dbReference>
<dbReference type="GO" id="GO:0005506">
    <property type="term" value="F:iron ion binding"/>
    <property type="evidence" value="ECO:0007669"/>
    <property type="project" value="InterPro"/>
</dbReference>
<dbReference type="GO" id="GO:0019684">
    <property type="term" value="P:photosynthesis, light reaction"/>
    <property type="evidence" value="ECO:0007669"/>
    <property type="project" value="UniProtKB-UniRule"/>
</dbReference>
<dbReference type="GO" id="GO:0022904">
    <property type="term" value="P:respiratory electron transport chain"/>
    <property type="evidence" value="ECO:0007669"/>
    <property type="project" value="InterPro"/>
</dbReference>
<dbReference type="Gene3D" id="1.10.760.10">
    <property type="entry name" value="Cytochrome c-like domain"/>
    <property type="match status" value="1"/>
</dbReference>
<dbReference type="HAMAP" id="MF_01378">
    <property type="entry name" value="PSII_Cyt550"/>
    <property type="match status" value="1"/>
</dbReference>
<dbReference type="InterPro" id="IPR009056">
    <property type="entry name" value="Cyt_c-like_dom"/>
</dbReference>
<dbReference type="InterPro" id="IPR036909">
    <property type="entry name" value="Cyt_c-like_dom_sf"/>
</dbReference>
<dbReference type="InterPro" id="IPR029490">
    <property type="entry name" value="Cytochrom_C550"/>
</dbReference>
<dbReference type="InterPro" id="IPR017851">
    <property type="entry name" value="PsbV_cyt_c550"/>
</dbReference>
<dbReference type="InterPro" id="IPR016003">
    <property type="entry name" value="PsbV_cyt_c550-like"/>
</dbReference>
<dbReference type="NCBIfam" id="TIGR03045">
    <property type="entry name" value="PS_II_C550"/>
    <property type="match status" value="1"/>
</dbReference>
<dbReference type="Pfam" id="PF14495">
    <property type="entry name" value="Cytochrom_C550"/>
    <property type="match status" value="1"/>
</dbReference>
<dbReference type="PIRSF" id="PIRSF005890">
    <property type="entry name" value="Phot_II_cyt_c550"/>
    <property type="match status" value="1"/>
</dbReference>
<dbReference type="SUPFAM" id="SSF46626">
    <property type="entry name" value="Cytochrome c"/>
    <property type="match status" value="1"/>
</dbReference>
<dbReference type="PROSITE" id="PS51007">
    <property type="entry name" value="CYTC"/>
    <property type="match status" value="1"/>
</dbReference>